<keyword id="KW-0217">Developmental protein</keyword>
<keyword id="KW-0221">Differentiation</keyword>
<keyword id="KW-0539">Nucleus</keyword>
<keyword id="KW-1185">Reference proteome</keyword>
<keyword id="KW-0694">RNA-binding</keyword>
<keyword id="KW-0744">Spermatogenesis</keyword>
<feature type="chain" id="PRO_0000309523" description="Adenosine deaminase domain-containing protein 1">
    <location>
        <begin position="1"/>
        <end position="586"/>
    </location>
</feature>
<feature type="domain" description="DRBM" evidence="3">
    <location>
        <begin position="98"/>
        <end position="166"/>
    </location>
</feature>
<feature type="domain" description="A to I editase" evidence="2">
    <location>
        <begin position="258"/>
        <end position="584"/>
    </location>
</feature>
<feature type="region of interest" description="Disordered" evidence="4">
    <location>
        <begin position="183"/>
        <end position="203"/>
    </location>
</feature>
<evidence type="ECO:0000250" key="1">
    <source>
        <dbReference type="UniProtKB" id="Q5SUE7"/>
    </source>
</evidence>
<evidence type="ECO:0000255" key="2">
    <source>
        <dbReference type="PROSITE-ProRule" id="PRU00240"/>
    </source>
</evidence>
<evidence type="ECO:0000255" key="3">
    <source>
        <dbReference type="PROSITE-ProRule" id="PRU00266"/>
    </source>
</evidence>
<evidence type="ECO:0000256" key="4">
    <source>
        <dbReference type="SAM" id="MobiDB-lite"/>
    </source>
</evidence>
<evidence type="ECO:0000305" key="5"/>
<reference key="1">
    <citation type="submission" date="2005-11" db="EMBL/GenBank/DDBJ databases">
        <authorList>
            <consortium name="NIH - Xenopus Gene Collection (XGC) project"/>
        </authorList>
    </citation>
    <scope>NUCLEOTIDE SEQUENCE [LARGE SCALE MRNA]</scope>
    <source>
        <tissue>Testis</tissue>
    </source>
</reference>
<name>ADAD1_XENLA</name>
<comment type="function">
    <text evidence="1">May be required for male fertility and normal male germ cell differentiation (By similarity). May play a role in spermatogenesis. Binds to RNA but not to DNA (By similarity).</text>
</comment>
<comment type="subcellular location">
    <subcellularLocation>
        <location evidence="1">Nucleus</location>
    </subcellularLocation>
</comment>
<comment type="similarity">
    <text evidence="5">Belongs to the ADAD family.</text>
</comment>
<gene>
    <name type="primary">adad1</name>
</gene>
<accession>Q32NG0</accession>
<dbReference type="EMBL" id="BC108644">
    <property type="protein sequence ID" value="AAI08645.1"/>
    <property type="molecule type" value="mRNA"/>
</dbReference>
<dbReference type="RefSeq" id="NP_001089899.1">
    <property type="nucleotide sequence ID" value="NM_001096430.1"/>
</dbReference>
<dbReference type="SMR" id="Q32NG0"/>
<dbReference type="DNASU" id="734966"/>
<dbReference type="GeneID" id="734966"/>
<dbReference type="KEGG" id="xla:734966"/>
<dbReference type="AGR" id="Xenbase:XB-GENE-866245"/>
<dbReference type="CTD" id="734966"/>
<dbReference type="Xenbase" id="XB-GENE-866245">
    <property type="gene designation" value="adad1.L"/>
</dbReference>
<dbReference type="OrthoDB" id="10268011at2759"/>
<dbReference type="Proteomes" id="UP000186698">
    <property type="component" value="Chromosome 1L"/>
</dbReference>
<dbReference type="Bgee" id="734966">
    <property type="expression patterns" value="Expressed in testis and 8 other cell types or tissues"/>
</dbReference>
<dbReference type="GO" id="GO:0005737">
    <property type="term" value="C:cytoplasm"/>
    <property type="evidence" value="ECO:0000318"/>
    <property type="project" value="GO_Central"/>
</dbReference>
<dbReference type="GO" id="GO:0005730">
    <property type="term" value="C:nucleolus"/>
    <property type="evidence" value="ECO:0000318"/>
    <property type="project" value="GO_Central"/>
</dbReference>
<dbReference type="GO" id="GO:0003726">
    <property type="term" value="F:double-stranded RNA adenosine deaminase activity"/>
    <property type="evidence" value="ECO:0000318"/>
    <property type="project" value="GO_Central"/>
</dbReference>
<dbReference type="GO" id="GO:0003725">
    <property type="term" value="F:double-stranded RNA binding"/>
    <property type="evidence" value="ECO:0000318"/>
    <property type="project" value="GO_Central"/>
</dbReference>
<dbReference type="GO" id="GO:0008251">
    <property type="term" value="F:tRNA-specific adenosine deaminase activity"/>
    <property type="evidence" value="ECO:0000318"/>
    <property type="project" value="GO_Central"/>
</dbReference>
<dbReference type="GO" id="GO:0006382">
    <property type="term" value="P:adenosine to inosine editing"/>
    <property type="evidence" value="ECO:0000318"/>
    <property type="project" value="GO_Central"/>
</dbReference>
<dbReference type="GO" id="GO:0006396">
    <property type="term" value="P:RNA processing"/>
    <property type="evidence" value="ECO:0000318"/>
    <property type="project" value="GO_Central"/>
</dbReference>
<dbReference type="GO" id="GO:0007286">
    <property type="term" value="P:spermatid development"/>
    <property type="evidence" value="ECO:0000250"/>
    <property type="project" value="UniProtKB"/>
</dbReference>
<dbReference type="CDD" id="cd19905">
    <property type="entry name" value="DSRM_ADAD1"/>
    <property type="match status" value="1"/>
</dbReference>
<dbReference type="FunFam" id="3.30.160.20:FF:000033">
    <property type="entry name" value="Adenosine deaminase domain-containing 1 (testis-specific)"/>
    <property type="match status" value="1"/>
</dbReference>
<dbReference type="Gene3D" id="3.30.160.20">
    <property type="match status" value="1"/>
</dbReference>
<dbReference type="InterPro" id="IPR002466">
    <property type="entry name" value="A_deamin"/>
</dbReference>
<dbReference type="InterPro" id="IPR044455">
    <property type="entry name" value="ADAD1_DSRM"/>
</dbReference>
<dbReference type="InterPro" id="IPR014720">
    <property type="entry name" value="dsRBD_dom"/>
</dbReference>
<dbReference type="PANTHER" id="PTHR10910:SF103">
    <property type="entry name" value="ADENOSINE DEAMINASE DOMAIN-CONTAINING PROTEIN 1"/>
    <property type="match status" value="1"/>
</dbReference>
<dbReference type="PANTHER" id="PTHR10910">
    <property type="entry name" value="EUKARYOTE SPECIFIC DSRNA BINDING PROTEIN"/>
    <property type="match status" value="1"/>
</dbReference>
<dbReference type="Pfam" id="PF02137">
    <property type="entry name" value="A_deamin"/>
    <property type="match status" value="1"/>
</dbReference>
<dbReference type="Pfam" id="PF00035">
    <property type="entry name" value="dsrm"/>
    <property type="match status" value="1"/>
</dbReference>
<dbReference type="SMART" id="SM00552">
    <property type="entry name" value="ADEAMc"/>
    <property type="match status" value="1"/>
</dbReference>
<dbReference type="SMART" id="SM00358">
    <property type="entry name" value="DSRM"/>
    <property type="match status" value="1"/>
</dbReference>
<dbReference type="SUPFAM" id="SSF54768">
    <property type="entry name" value="dsRNA-binding domain-like"/>
    <property type="match status" value="1"/>
</dbReference>
<dbReference type="PROSITE" id="PS50141">
    <property type="entry name" value="A_DEAMIN_EDITASE"/>
    <property type="match status" value="1"/>
</dbReference>
<dbReference type="PROSITE" id="PS50137">
    <property type="entry name" value="DS_RBD"/>
    <property type="match status" value="1"/>
</dbReference>
<organism>
    <name type="scientific">Xenopus laevis</name>
    <name type="common">African clawed frog</name>
    <dbReference type="NCBI Taxonomy" id="8355"/>
    <lineage>
        <taxon>Eukaryota</taxon>
        <taxon>Metazoa</taxon>
        <taxon>Chordata</taxon>
        <taxon>Craniata</taxon>
        <taxon>Vertebrata</taxon>
        <taxon>Euteleostomi</taxon>
        <taxon>Amphibia</taxon>
        <taxon>Batrachia</taxon>
        <taxon>Anura</taxon>
        <taxon>Pipoidea</taxon>
        <taxon>Pipidae</taxon>
        <taxon>Xenopodinae</taxon>
        <taxon>Xenopus</taxon>
        <taxon>Xenopus</taxon>
    </lineage>
</organism>
<protein>
    <recommendedName>
        <fullName>Adenosine deaminase domain-containing protein 1</fullName>
    </recommendedName>
</protein>
<proteinExistence type="evidence at transcript level"/>
<sequence length="586" mass="64796">MASNRNWSQHSSVPSFAQMLKKNLPDPGTSPAVNQTSTLSTCCLYNQPDCGTARVTRITGNFPEPFLSKMIVPPSLSSLTPRKVTKEFMVKYRRGDLNPISALYQFAQMQRMEIELKETVTTGNVFGAYFAFCAVVDGLEYKTGMGQNKKEAKANAAKLALDELLLHEDPALIDSENQSLNVIENPPPLPMNPRGTTETSTISRTRTDKRTFIHEKISSIIKETFTNLVSKYPEYENCGSSLAAFVIEKGGQHWEVVAIGTGEFNYGQSLQSDGRVLHDSHAMVVARRSLLRYFYRQLLLLYSGNNGMMDKSIFCTEPATNLLALKPNLNIFLYMNQLPKGAAQTNPQLCLSPHSLSAHEANDKLSLHVSVEGKNIPASYYSGEIVHNLYSMSSTDKLTRWEVLGVQGALLSIFIQPVYINSIIIGNAACSDTRGLEIAVKQRIDDALTSRLPMFYLVNRPYMSIVSSTHLTNNDTANKTLSLNWSQGDACVEVVDAAIGRTVEGSPFKSGSCLASRLCKAAMLCRFNLVVKESKRNAIPSGLSYHEAKRLAGPYQEAKCLLNSYFKQQGFGSWIAKPPIIGEFTM</sequence>